<feature type="chain" id="PRO_0000286993" description="Cyclin-A2-1">
    <location>
        <begin position="1"/>
        <end position="443"/>
    </location>
</feature>
<feature type="region of interest" description="Disordered" evidence="1">
    <location>
        <begin position="1"/>
        <end position="61"/>
    </location>
</feature>
<feature type="compositionally biased region" description="Basic residues" evidence="1">
    <location>
        <begin position="1"/>
        <end position="10"/>
    </location>
</feature>
<feature type="compositionally biased region" description="Basic and acidic residues" evidence="1">
    <location>
        <begin position="11"/>
        <end position="25"/>
    </location>
</feature>
<feature type="sequence conflict" description="In Ref. 1; CAA83460." evidence="6" ref="1">
    <original>K</original>
    <variation>RQ</variation>
    <location>
        <position position="97"/>
    </location>
</feature>
<feature type="sequence conflict" description="In Ref. 1; CAA83460." evidence="6" ref="1">
    <original>QK</original>
    <variation>E</variation>
    <location>
        <begin position="144"/>
        <end position="145"/>
    </location>
</feature>
<feature type="sequence conflict" description="In Ref. 1; CAA83460." evidence="6" ref="1">
    <original>V</original>
    <variation>L</variation>
    <location>
        <position position="204"/>
    </location>
</feature>
<feature type="sequence conflict" description="In Ref. 1; CAA83460." evidence="6" ref="1">
    <original>Q</original>
    <variation>R</variation>
    <location>
        <position position="253"/>
    </location>
</feature>
<feature type="sequence conflict" description="In Ref. 1; CAA83460." evidence="6" ref="1">
    <original>I</original>
    <variation>V</variation>
    <location>
        <position position="260"/>
    </location>
</feature>
<feature type="sequence conflict" description="In Ref. 1; CAA83460." evidence="6" ref="1">
    <original>Q</original>
    <variation>K</variation>
    <location>
        <position position="381"/>
    </location>
</feature>
<feature type="sequence conflict" description="In Ref. 1; CAA83460." evidence="6" ref="1">
    <original>T</original>
    <variation>A</variation>
    <location>
        <position position="397"/>
    </location>
</feature>
<feature type="sequence conflict" description="In Ref. 1; CAA83460." evidence="6" ref="1">
    <original>E</original>
    <variation>D</variation>
    <location>
        <position position="403"/>
    </location>
</feature>
<feature type="sequence conflict" description="In Ref. 1; CAA83460." evidence="6" ref="1">
    <original>H</original>
    <variation>R</variation>
    <location>
        <position position="417"/>
    </location>
</feature>
<keyword id="KW-0131">Cell cycle</keyword>
<keyword id="KW-0132">Cell division</keyword>
<keyword id="KW-0195">Cyclin</keyword>
<keyword id="KW-1185">Reference proteome</keyword>
<gene>
    <name type="primary">CYCA2-1</name>
    <name type="synonym">CYC3A</name>
    <name type="ordered locus">At5g25380</name>
    <name type="ORF">F18G18.15</name>
</gene>
<comment type="function">
    <text evidence="4">May negatively regulate endocycles and act as a regulator of ploidy levels in endoreduplication.</text>
</comment>
<comment type="tissue specificity">
    <text evidence="2 5">Expressed in tissues with active cell division: apical root and shoot meristems, lateral root and leaf primordia, floral meristems and developing pollen.</text>
</comment>
<comment type="developmental stage">
    <text evidence="2">Starts to be expressed during S phase with a maximum just before the G2-to-M boundary and disappears in the metaphase of mitosis. Expressed during embryogenesis in the ovule, integuments, egg cell and synergids, and in the embryo up to late-torpedo stage. Expressed during germination in the root apical meristem, shoot apical meristem, vascular bundles of the cotyledons and vascular cylinder of the roots up to lateral roots emergence. Expressed during flowering in the caulines leaves, peduncle, sepals of flower buds, early expanded petals, ovary, placenta, funiculi, developing ovules, pollen connective tissues, tapetum, endothecium, epidermis and developing pollen grains.</text>
</comment>
<comment type="induction">
    <text evidence="2 3">By auxin in the roots, cytokinin in the shoot apex and sucrose in suspension cell culture. Down-regulated by salt stress in root meristem and shoot apex.</text>
</comment>
<comment type="similarity">
    <text evidence="6">Belongs to the cyclin family. Cyclin AB subfamily.</text>
</comment>
<comment type="sequence caution" evidence="6">
    <conflict type="erroneous gene model prediction">
        <sequence resource="EMBL-CDS" id="AED93433"/>
    </conflict>
</comment>
<sequence>MHRASSKHTNAKKEAISTSKIRDNNVRVTRSRAKALGVSNSPSKPAFKHETKRVARPSNKRMASDNITVCNQKRRAVLKDVTNTLAESIISTEGNVKACKRGGKETKQIEEDGLVDVDGEKSKLAEDLSKIRMVESLDASASKQKLVDCAEEDRSDVTDCVQIVDIDSGVQDPQFCSLYAASIYDSINVAELEQRPSTSYMVQVQRDIDPTMRGILIDWLVEVSEEYKLVSDTLYLTVNLIDRFMSHNYIEKQKLQLLGITCMLIASKYEEISAPRLEEFCFITDNTYTRLEVLSMEIKVLNSLHFRLSVPTTKTFLRRFIRAAQASDKVPLIEMEYLANYFAELTLTEYTFLRFLPSLIAASAVFLARWTLDQSNHPWNQTLQHYTRYETSALKNTVLAMEELQLNTSGSTLIAIHTKYNQQKFKRVATLTSPERVNTLFSR</sequence>
<dbReference type="EMBL" id="Z31589">
    <property type="protein sequence ID" value="CAA83460.1"/>
    <property type="molecule type" value="Genomic_DNA"/>
</dbReference>
<dbReference type="EMBL" id="AC006258">
    <property type="protein sequence ID" value="AAC98445.1"/>
    <property type="molecule type" value="Genomic_DNA"/>
</dbReference>
<dbReference type="EMBL" id="CP002688">
    <property type="protein sequence ID" value="AED93433.1"/>
    <property type="status" value="ALT_SEQ"/>
    <property type="molecule type" value="Genomic_DNA"/>
</dbReference>
<dbReference type="EMBL" id="CP002688">
    <property type="protein sequence ID" value="ANM70898.1"/>
    <property type="molecule type" value="Genomic_DNA"/>
</dbReference>
<dbReference type="RefSeq" id="NP_001318646.1">
    <property type="nucleotide sequence ID" value="NM_001343923.1"/>
</dbReference>
<dbReference type="RefSeq" id="NP_001332473.1">
    <property type="nucleotide sequence ID" value="NM_001343925.1"/>
</dbReference>
<dbReference type="RefSeq" id="NP_197920.2">
    <property type="nucleotide sequence ID" value="NM_122447.3"/>
</dbReference>
<dbReference type="SMR" id="Q39071"/>
<dbReference type="BioGRID" id="17885">
    <property type="interactions" value="12"/>
</dbReference>
<dbReference type="FunCoup" id="Q39071">
    <property type="interactions" value="1559"/>
</dbReference>
<dbReference type="IntAct" id="Q39071">
    <property type="interactions" value="5"/>
</dbReference>
<dbReference type="STRING" id="3702.Q39071"/>
<dbReference type="PaxDb" id="3702-AT5G25380.1"/>
<dbReference type="EnsemblPlants" id="AT5G25380.4">
    <property type="protein sequence ID" value="AT5G25380.4"/>
    <property type="gene ID" value="AT5G25380"/>
</dbReference>
<dbReference type="GeneID" id="832610"/>
<dbReference type="Gramene" id="AT5G25380.4">
    <property type="protein sequence ID" value="AT5G25380.4"/>
    <property type="gene ID" value="AT5G25380"/>
</dbReference>
<dbReference type="KEGG" id="ath:AT5G25380"/>
<dbReference type="Araport" id="AT5G25380"/>
<dbReference type="TAIR" id="AT5G25380">
    <property type="gene designation" value="CYCA2"/>
</dbReference>
<dbReference type="eggNOG" id="KOG0654">
    <property type="taxonomic scope" value="Eukaryota"/>
</dbReference>
<dbReference type="HOGENOM" id="CLU_020695_13_3_1"/>
<dbReference type="InParanoid" id="Q39071"/>
<dbReference type="PRO" id="PR:Q39071"/>
<dbReference type="Proteomes" id="UP000006548">
    <property type="component" value="Chromosome 5"/>
</dbReference>
<dbReference type="ExpressionAtlas" id="Q39071">
    <property type="expression patterns" value="baseline and differential"/>
</dbReference>
<dbReference type="GO" id="GO:0016538">
    <property type="term" value="F:cyclin-dependent protein serine/threonine kinase regulator activity"/>
    <property type="evidence" value="ECO:0007669"/>
    <property type="project" value="InterPro"/>
</dbReference>
<dbReference type="GO" id="GO:0051301">
    <property type="term" value="P:cell division"/>
    <property type="evidence" value="ECO:0007669"/>
    <property type="project" value="UniProtKB-KW"/>
</dbReference>
<dbReference type="GO" id="GO:0044772">
    <property type="term" value="P:mitotic cell cycle phase transition"/>
    <property type="evidence" value="ECO:0007669"/>
    <property type="project" value="InterPro"/>
</dbReference>
<dbReference type="CDD" id="cd20506">
    <property type="entry name" value="CYCLIN_AtCycA-like_rpt2"/>
    <property type="match status" value="1"/>
</dbReference>
<dbReference type="CDD" id="cd20562">
    <property type="entry name" value="CYCLIN_AtCycA_like_rpt1"/>
    <property type="match status" value="1"/>
</dbReference>
<dbReference type="FunFam" id="1.10.472.10:FF:000013">
    <property type="entry name" value="Cyclin A1"/>
    <property type="match status" value="1"/>
</dbReference>
<dbReference type="FunFam" id="1.10.472.10:FF:000167">
    <property type="entry name" value="Mitotic cyclin 6"/>
    <property type="match status" value="1"/>
</dbReference>
<dbReference type="Gene3D" id="1.10.472.10">
    <property type="entry name" value="Cyclin-like"/>
    <property type="match status" value="2"/>
</dbReference>
<dbReference type="InterPro" id="IPR039361">
    <property type="entry name" value="Cyclin"/>
</dbReference>
<dbReference type="InterPro" id="IPR013763">
    <property type="entry name" value="Cyclin-like_dom"/>
</dbReference>
<dbReference type="InterPro" id="IPR036915">
    <property type="entry name" value="Cyclin-like_sf"/>
</dbReference>
<dbReference type="InterPro" id="IPR046965">
    <property type="entry name" value="Cyclin_A/B-like"/>
</dbReference>
<dbReference type="InterPro" id="IPR004367">
    <property type="entry name" value="Cyclin_C-dom"/>
</dbReference>
<dbReference type="InterPro" id="IPR006671">
    <property type="entry name" value="Cyclin_N"/>
</dbReference>
<dbReference type="InterPro" id="IPR048258">
    <property type="entry name" value="Cyclins_cyclin-box"/>
</dbReference>
<dbReference type="PANTHER" id="PTHR10177">
    <property type="entry name" value="CYCLINS"/>
    <property type="match status" value="1"/>
</dbReference>
<dbReference type="Pfam" id="PF02984">
    <property type="entry name" value="Cyclin_C"/>
    <property type="match status" value="1"/>
</dbReference>
<dbReference type="Pfam" id="PF00134">
    <property type="entry name" value="Cyclin_N"/>
    <property type="match status" value="1"/>
</dbReference>
<dbReference type="PIRSF" id="PIRSF001771">
    <property type="entry name" value="Cyclin_A_B_D_E"/>
    <property type="match status" value="1"/>
</dbReference>
<dbReference type="SMART" id="SM00385">
    <property type="entry name" value="CYCLIN"/>
    <property type="match status" value="2"/>
</dbReference>
<dbReference type="SMART" id="SM01332">
    <property type="entry name" value="Cyclin_C"/>
    <property type="match status" value="1"/>
</dbReference>
<dbReference type="SUPFAM" id="SSF47954">
    <property type="entry name" value="Cyclin-like"/>
    <property type="match status" value="2"/>
</dbReference>
<dbReference type="PROSITE" id="PS00292">
    <property type="entry name" value="CYCLINS"/>
    <property type="match status" value="1"/>
</dbReference>
<evidence type="ECO:0000256" key="1">
    <source>
        <dbReference type="SAM" id="MobiDB-lite"/>
    </source>
</evidence>
<evidence type="ECO:0000269" key="2">
    <source>
    </source>
</evidence>
<evidence type="ECO:0000269" key="3">
    <source>
    </source>
</evidence>
<evidence type="ECO:0000269" key="4">
    <source>
    </source>
</evidence>
<evidence type="ECO:0000269" key="5">
    <source>
    </source>
</evidence>
<evidence type="ECO:0000305" key="6"/>
<protein>
    <recommendedName>
        <fullName>Cyclin-A2-1</fullName>
    </recommendedName>
    <alternativeName>
        <fullName>Cyc3a-At</fullName>
    </alternativeName>
    <alternativeName>
        <fullName>Cyclin-3a</fullName>
    </alternativeName>
    <alternativeName>
        <fullName>G2/mitotic-specific cyclin-A2-1</fullName>
        <shortName>CycA2;1</shortName>
    </alternativeName>
</protein>
<name>CCA21_ARATH</name>
<reference key="1">
    <citation type="journal article" date="1994" name="Proc. Natl. Acad. Sci. U.S.A.">
        <title>Three discrete classes of Arabidopsis cyclins are expressed during different intervals of the cell cycle.</title>
        <authorList>
            <person name="Ferreira P."/>
            <person name="Hemerly A."/>
            <person name="de Almeida Engler J."/>
            <person name="Bergounioux C."/>
            <person name="Burssens S."/>
            <person name="van Montagu M."/>
            <person name="Engler G."/>
            <person name="Inze D."/>
        </authorList>
    </citation>
    <scope>NUCLEOTIDE SEQUENCE [GENOMIC DNA]</scope>
    <scope>TISSUE SPECIFICITY</scope>
    <source>
        <strain>cv. Columbia</strain>
    </source>
</reference>
<reference key="2">
    <citation type="journal article" date="2000" name="Nature">
        <title>Sequence and analysis of chromosome 5 of the plant Arabidopsis thaliana.</title>
        <authorList>
            <person name="Tabata S."/>
            <person name="Kaneko T."/>
            <person name="Nakamura Y."/>
            <person name="Kotani H."/>
            <person name="Kato T."/>
            <person name="Asamizu E."/>
            <person name="Miyajima N."/>
            <person name="Sasamoto S."/>
            <person name="Kimura T."/>
            <person name="Hosouchi T."/>
            <person name="Kawashima K."/>
            <person name="Kohara M."/>
            <person name="Matsumoto M."/>
            <person name="Matsuno A."/>
            <person name="Muraki A."/>
            <person name="Nakayama S."/>
            <person name="Nakazaki N."/>
            <person name="Naruo K."/>
            <person name="Okumura S."/>
            <person name="Shinpo S."/>
            <person name="Takeuchi C."/>
            <person name="Wada T."/>
            <person name="Watanabe A."/>
            <person name="Yamada M."/>
            <person name="Yasuda M."/>
            <person name="Sato S."/>
            <person name="de la Bastide M."/>
            <person name="Huang E."/>
            <person name="Spiegel L."/>
            <person name="Gnoj L."/>
            <person name="O'Shaughnessy A."/>
            <person name="Preston R."/>
            <person name="Habermann K."/>
            <person name="Murray J."/>
            <person name="Johnson D."/>
            <person name="Rohlfing T."/>
            <person name="Nelson J."/>
            <person name="Stoneking T."/>
            <person name="Pepin K."/>
            <person name="Spieth J."/>
            <person name="Sekhon M."/>
            <person name="Armstrong J."/>
            <person name="Becker M."/>
            <person name="Belter E."/>
            <person name="Cordum H."/>
            <person name="Cordes M."/>
            <person name="Courtney L."/>
            <person name="Courtney W."/>
            <person name="Dante M."/>
            <person name="Du H."/>
            <person name="Edwards J."/>
            <person name="Fryman J."/>
            <person name="Haakensen B."/>
            <person name="Lamar E."/>
            <person name="Latreille P."/>
            <person name="Leonard S."/>
            <person name="Meyer R."/>
            <person name="Mulvaney E."/>
            <person name="Ozersky P."/>
            <person name="Riley A."/>
            <person name="Strowmatt C."/>
            <person name="Wagner-McPherson C."/>
            <person name="Wollam A."/>
            <person name="Yoakum M."/>
            <person name="Bell M."/>
            <person name="Dedhia N."/>
            <person name="Parnell L."/>
            <person name="Shah R."/>
            <person name="Rodriguez M."/>
            <person name="Hoon See L."/>
            <person name="Vil D."/>
            <person name="Baker J."/>
            <person name="Kirchoff K."/>
            <person name="Toth K."/>
            <person name="King L."/>
            <person name="Bahret A."/>
            <person name="Miller B."/>
            <person name="Marra M.A."/>
            <person name="Martienssen R."/>
            <person name="McCombie W.R."/>
            <person name="Wilson R.K."/>
            <person name="Murphy G."/>
            <person name="Bancroft I."/>
            <person name="Volckaert G."/>
            <person name="Wambutt R."/>
            <person name="Duesterhoeft A."/>
            <person name="Stiekema W."/>
            <person name="Pohl T."/>
            <person name="Entian K.-D."/>
            <person name="Terryn N."/>
            <person name="Hartley N."/>
            <person name="Bent E."/>
            <person name="Johnson S."/>
            <person name="Langham S.-A."/>
            <person name="McCullagh B."/>
            <person name="Robben J."/>
            <person name="Grymonprez B."/>
            <person name="Zimmermann W."/>
            <person name="Ramsperger U."/>
            <person name="Wedler H."/>
            <person name="Balke K."/>
            <person name="Wedler E."/>
            <person name="Peters S."/>
            <person name="van Staveren M."/>
            <person name="Dirkse W."/>
            <person name="Mooijman P."/>
            <person name="Klein Lankhorst R."/>
            <person name="Weitzenegger T."/>
            <person name="Bothe G."/>
            <person name="Rose M."/>
            <person name="Hauf J."/>
            <person name="Berneiser S."/>
            <person name="Hempel S."/>
            <person name="Feldpausch M."/>
            <person name="Lamberth S."/>
            <person name="Villarroel R."/>
            <person name="Gielen J."/>
            <person name="Ardiles W."/>
            <person name="Bents O."/>
            <person name="Lemcke K."/>
            <person name="Kolesov G."/>
            <person name="Mayer K.F.X."/>
            <person name="Rudd S."/>
            <person name="Schoof H."/>
            <person name="Schueller C."/>
            <person name="Zaccaria P."/>
            <person name="Mewes H.-W."/>
            <person name="Bevan M."/>
            <person name="Fransz P.F."/>
        </authorList>
    </citation>
    <scope>NUCLEOTIDE SEQUENCE [LARGE SCALE GENOMIC DNA]</scope>
    <source>
        <strain>cv. Columbia</strain>
    </source>
</reference>
<reference key="3">
    <citation type="journal article" date="2017" name="Plant J.">
        <title>Araport11: a complete reannotation of the Arabidopsis thaliana reference genome.</title>
        <authorList>
            <person name="Cheng C.Y."/>
            <person name="Krishnakumar V."/>
            <person name="Chan A.P."/>
            <person name="Thibaud-Nissen F."/>
            <person name="Schobel S."/>
            <person name="Town C.D."/>
        </authorList>
    </citation>
    <scope>GENOME REANNOTATION</scope>
    <source>
        <strain>cv. Columbia</strain>
    </source>
</reference>
<reference key="4">
    <citation type="journal article" date="2000" name="Planta">
        <title>Developmental expression of the Arabidopsis thaliana CycA2;1 gene.</title>
        <authorList>
            <person name="Burssens S."/>
            <person name="de Almeida Engler J."/>
            <person name="Beeckman T."/>
            <person name="Richard C."/>
            <person name="Shaul O."/>
            <person name="Ferreira P.C.G."/>
            <person name="van Montagu M."/>
            <person name="Inze D."/>
        </authorList>
    </citation>
    <scope>TISSUE SPECIFICITY</scope>
    <scope>DEVELOPMENTAL STAGE</scope>
    <scope>INDUCTION</scope>
</reference>
<reference key="5">
    <citation type="journal article" date="2000" name="Planta">
        <title>Expression of cell cycle regulatory genes and morphological alterations in response to salt stress in Arabidopsis thaliana.</title>
        <authorList>
            <person name="Burssens S."/>
            <person name="Himanen K."/>
            <person name="van de Cotte B."/>
            <person name="Beeckman T."/>
            <person name="van Montagu M."/>
            <person name="Inze D."/>
            <person name="Verbruggen N."/>
        </authorList>
    </citation>
    <scope>INDUCTION</scope>
</reference>
<reference key="6">
    <citation type="journal article" date="2004" name="Plant Physiol.">
        <title>Genome-wide analysis of the cyclin family in Arabidopsis and comparative phylogenetic analysis of plant cyclin-like proteins.</title>
        <authorList>
            <person name="Wang G."/>
            <person name="Kong H."/>
            <person name="Sun Y."/>
            <person name="Zhang X."/>
            <person name="Zhang W."/>
            <person name="Altman N."/>
            <person name="dePamphilis C.W."/>
            <person name="Ma H."/>
        </authorList>
    </citation>
    <scope>GENE FAMILY</scope>
    <scope>NOMENCLATURE</scope>
</reference>
<reference key="7">
    <citation type="journal article" date="2006" name="Plant Cell">
        <title>Increased level of polyploidy1, a conserved repressor of CYCLINA2 transcription, controls endoreduplication in Arabidopsis.</title>
        <authorList>
            <person name="Yoshizumi T."/>
            <person name="Tsumoto Y."/>
            <person name="Takiguchi T."/>
            <person name="Nagata N."/>
            <person name="Yamamoto Y.Y."/>
            <person name="Kawashima M."/>
            <person name="Ichikawa T."/>
            <person name="Nakazawa M."/>
            <person name="Yamamoto N."/>
            <person name="Matsui M."/>
        </authorList>
    </citation>
    <scope>FUNCTION</scope>
</reference>
<proteinExistence type="evidence at transcript level"/>
<organism>
    <name type="scientific">Arabidopsis thaliana</name>
    <name type="common">Mouse-ear cress</name>
    <dbReference type="NCBI Taxonomy" id="3702"/>
    <lineage>
        <taxon>Eukaryota</taxon>
        <taxon>Viridiplantae</taxon>
        <taxon>Streptophyta</taxon>
        <taxon>Embryophyta</taxon>
        <taxon>Tracheophyta</taxon>
        <taxon>Spermatophyta</taxon>
        <taxon>Magnoliopsida</taxon>
        <taxon>eudicotyledons</taxon>
        <taxon>Gunneridae</taxon>
        <taxon>Pentapetalae</taxon>
        <taxon>rosids</taxon>
        <taxon>malvids</taxon>
        <taxon>Brassicales</taxon>
        <taxon>Brassicaceae</taxon>
        <taxon>Camelineae</taxon>
        <taxon>Arabidopsis</taxon>
    </lineage>
</organism>
<accession>Q39071</accession>
<accession>F4JWR7</accession>
<accession>Q9ZU09</accession>